<comment type="function">
    <text evidence="1">Bidirectionally degrades single-stranded DNA into large acid-insoluble oligonucleotides, which are then degraded further into small acid-soluble oligonucleotides.</text>
</comment>
<comment type="catalytic activity">
    <reaction evidence="1">
        <text>Exonucleolytic cleavage in either 5'- to 3'- or 3'- to 5'-direction to yield nucleoside 5'-phosphates.</text>
        <dbReference type="EC" id="3.1.11.6"/>
    </reaction>
</comment>
<comment type="subunit">
    <text evidence="1">Heterooligomer composed of large and small subunits.</text>
</comment>
<comment type="subcellular location">
    <subcellularLocation>
        <location evidence="1">Cytoplasm</location>
    </subcellularLocation>
</comment>
<comment type="similarity">
    <text evidence="1">Belongs to the XseA family.</text>
</comment>
<reference key="1">
    <citation type="journal article" date="2006" name="PLoS Genet.">
        <title>Who ate whom? Adaptive Helicobacter genomic changes that accompanied a host jump from early humans to large felines.</title>
        <authorList>
            <person name="Eppinger M."/>
            <person name="Baar C."/>
            <person name="Linz B."/>
            <person name="Raddatz G."/>
            <person name="Lanz C."/>
            <person name="Keller H."/>
            <person name="Morelli G."/>
            <person name="Gressmann H."/>
            <person name="Achtman M."/>
            <person name="Schuster S.C."/>
        </authorList>
    </citation>
    <scope>NUCLEOTIDE SEQUENCE [LARGE SCALE GENOMIC DNA]</scope>
    <source>
        <strain>Sheeba</strain>
    </source>
</reference>
<gene>
    <name evidence="1" type="primary">xseA</name>
    <name type="ordered locus">Hac_1349</name>
</gene>
<proteinExistence type="inferred from homology"/>
<name>EX7L_HELAH</name>
<feature type="chain" id="PRO_0000303790" description="Exodeoxyribonuclease 7 large subunit">
    <location>
        <begin position="1"/>
        <end position="420"/>
    </location>
</feature>
<dbReference type="EC" id="3.1.11.6" evidence="1"/>
<dbReference type="EMBL" id="AM260522">
    <property type="protein sequence ID" value="CAK00087.1"/>
    <property type="molecule type" value="Genomic_DNA"/>
</dbReference>
<dbReference type="RefSeq" id="WP_011578177.1">
    <property type="nucleotide sequence ID" value="NC_008229.1"/>
</dbReference>
<dbReference type="SMR" id="Q17W89"/>
<dbReference type="STRING" id="382638.Hac_1349"/>
<dbReference type="GeneID" id="31758665"/>
<dbReference type="KEGG" id="hac:Hac_1349"/>
<dbReference type="eggNOG" id="COG1570">
    <property type="taxonomic scope" value="Bacteria"/>
</dbReference>
<dbReference type="HOGENOM" id="CLU_023625_2_0_7"/>
<dbReference type="OrthoDB" id="9802795at2"/>
<dbReference type="BioCyc" id="HACI382638:HAC_RS05795-MONOMER"/>
<dbReference type="Proteomes" id="UP000000775">
    <property type="component" value="Chromosome"/>
</dbReference>
<dbReference type="GO" id="GO:0005737">
    <property type="term" value="C:cytoplasm"/>
    <property type="evidence" value="ECO:0007669"/>
    <property type="project" value="UniProtKB-SubCell"/>
</dbReference>
<dbReference type="GO" id="GO:0009318">
    <property type="term" value="C:exodeoxyribonuclease VII complex"/>
    <property type="evidence" value="ECO:0007669"/>
    <property type="project" value="InterPro"/>
</dbReference>
<dbReference type="GO" id="GO:0008855">
    <property type="term" value="F:exodeoxyribonuclease VII activity"/>
    <property type="evidence" value="ECO:0007669"/>
    <property type="project" value="UniProtKB-UniRule"/>
</dbReference>
<dbReference type="GO" id="GO:0003676">
    <property type="term" value="F:nucleic acid binding"/>
    <property type="evidence" value="ECO:0007669"/>
    <property type="project" value="InterPro"/>
</dbReference>
<dbReference type="GO" id="GO:0006308">
    <property type="term" value="P:DNA catabolic process"/>
    <property type="evidence" value="ECO:0007669"/>
    <property type="project" value="UniProtKB-UniRule"/>
</dbReference>
<dbReference type="CDD" id="cd04489">
    <property type="entry name" value="ExoVII_LU_OBF"/>
    <property type="match status" value="1"/>
</dbReference>
<dbReference type="Gene3D" id="2.40.50.1010">
    <property type="match status" value="1"/>
</dbReference>
<dbReference type="HAMAP" id="MF_00378">
    <property type="entry name" value="Exonuc_7_L"/>
    <property type="match status" value="1"/>
</dbReference>
<dbReference type="InterPro" id="IPR003753">
    <property type="entry name" value="Exonuc_VII_L"/>
</dbReference>
<dbReference type="InterPro" id="IPR020579">
    <property type="entry name" value="Exonuc_VII_lsu_C"/>
</dbReference>
<dbReference type="InterPro" id="IPR025824">
    <property type="entry name" value="OB-fold_nuc-bd_dom"/>
</dbReference>
<dbReference type="NCBIfam" id="TIGR00237">
    <property type="entry name" value="xseA"/>
    <property type="match status" value="1"/>
</dbReference>
<dbReference type="PANTHER" id="PTHR30008">
    <property type="entry name" value="EXODEOXYRIBONUCLEASE 7 LARGE SUBUNIT"/>
    <property type="match status" value="1"/>
</dbReference>
<dbReference type="PANTHER" id="PTHR30008:SF0">
    <property type="entry name" value="EXODEOXYRIBONUCLEASE 7 LARGE SUBUNIT"/>
    <property type="match status" value="1"/>
</dbReference>
<dbReference type="Pfam" id="PF02601">
    <property type="entry name" value="Exonuc_VII_L"/>
    <property type="match status" value="1"/>
</dbReference>
<dbReference type="Pfam" id="PF13742">
    <property type="entry name" value="tRNA_anti_2"/>
    <property type="match status" value="1"/>
</dbReference>
<protein>
    <recommendedName>
        <fullName evidence="1">Exodeoxyribonuclease 7 large subunit</fullName>
        <ecNumber evidence="1">3.1.11.6</ecNumber>
    </recommendedName>
    <alternativeName>
        <fullName evidence="1">Exodeoxyribonuclease VII large subunit</fullName>
        <shortName evidence="1">Exonuclease VII large subunit</shortName>
    </alternativeName>
</protein>
<organism>
    <name type="scientific">Helicobacter acinonychis (strain Sheeba)</name>
    <dbReference type="NCBI Taxonomy" id="382638"/>
    <lineage>
        <taxon>Bacteria</taxon>
        <taxon>Pseudomonadati</taxon>
        <taxon>Campylobacterota</taxon>
        <taxon>Epsilonproteobacteria</taxon>
        <taxon>Campylobacterales</taxon>
        <taxon>Helicobacteraceae</taxon>
        <taxon>Helicobacter</taxon>
    </lineage>
</organism>
<evidence type="ECO:0000255" key="1">
    <source>
        <dbReference type="HAMAP-Rule" id="MF_00378"/>
    </source>
</evidence>
<sequence length="420" mass="47037">MDALSVSEINAKIKALLEATFLQVRVQGEVSNLTIHKVSGHAYFSLKDSQSVIRCTLFRGNASKLKFALKEGQEVAVFGAISVYPPRGDYQINCFEIEPKDWGSLALALEQLKEKLRLKGYFDKENKLPKPSFPKRVAIITSQNSAAWADMQKIAFKRWPMCELVCINTLMQGEGCVQSVVESIAYADSFYNTRNAFDAIVVARGGGSMEDLYSFNDERIADALHLAKTFSMSAIGHESDFLLSDSVADLRASTPSNAMEILLPSSEEWQQKLDGFNLKLQRSFKILLHQKKVHLEHLAASLKRLSFENKHHLNSLKLEKLKIALENKTLEFLRLKKTLLEKISTQLSTSPFLQTKTERLNALDNALKLAHAHLKLPKFGAFVSKNNQAIELEELKIGDKIELNNEKARASAAILSVDKA</sequence>
<keyword id="KW-0963">Cytoplasm</keyword>
<keyword id="KW-0269">Exonuclease</keyword>
<keyword id="KW-0378">Hydrolase</keyword>
<keyword id="KW-0540">Nuclease</keyword>
<accession>Q17W89</accession>